<protein>
    <recommendedName>
        <fullName evidence="1">Putative membrane protein insertion efficiency factor</fullName>
    </recommendedName>
</protein>
<reference key="1">
    <citation type="journal article" date="2006" name="Nat. Biotechnol.">
        <title>Complete genome of the mutualistic, N2-fixing grass endophyte Azoarcus sp. strain BH72.</title>
        <authorList>
            <person name="Krause A."/>
            <person name="Ramakumar A."/>
            <person name="Bartels D."/>
            <person name="Battistoni F."/>
            <person name="Bekel T."/>
            <person name="Boch J."/>
            <person name="Boehm M."/>
            <person name="Friedrich F."/>
            <person name="Hurek T."/>
            <person name="Krause L."/>
            <person name="Linke B."/>
            <person name="McHardy A.C."/>
            <person name="Sarkar A."/>
            <person name="Schneiker S."/>
            <person name="Syed A.A."/>
            <person name="Thauer R."/>
            <person name="Vorhoelter F.-J."/>
            <person name="Weidner S."/>
            <person name="Puehler A."/>
            <person name="Reinhold-Hurek B."/>
            <person name="Kaiser O."/>
            <person name="Goesmann A."/>
        </authorList>
    </citation>
    <scope>NUCLEOTIDE SEQUENCE [LARGE SCALE GENOMIC DNA]</scope>
    <source>
        <strain>BH72</strain>
    </source>
</reference>
<comment type="function">
    <text evidence="1">Could be involved in insertion of integral membrane proteins into the membrane.</text>
</comment>
<comment type="subcellular location">
    <subcellularLocation>
        <location evidence="1">Cell inner membrane</location>
        <topology evidence="1">Peripheral membrane protein</topology>
        <orientation evidence="1">Cytoplasmic side</orientation>
    </subcellularLocation>
</comment>
<comment type="similarity">
    <text evidence="1">Belongs to the UPF0161 family.</text>
</comment>
<evidence type="ECO:0000255" key="1">
    <source>
        <dbReference type="HAMAP-Rule" id="MF_00386"/>
    </source>
</evidence>
<dbReference type="EMBL" id="AM406670">
    <property type="protein sequence ID" value="CAL96606.1"/>
    <property type="molecule type" value="Genomic_DNA"/>
</dbReference>
<dbReference type="RefSeq" id="WP_011767712.1">
    <property type="nucleotide sequence ID" value="NC_008702.1"/>
</dbReference>
<dbReference type="STRING" id="62928.azo3990"/>
<dbReference type="KEGG" id="aoa:dqs_4133"/>
<dbReference type="KEGG" id="azo:azo3990"/>
<dbReference type="eggNOG" id="COG0759">
    <property type="taxonomic scope" value="Bacteria"/>
</dbReference>
<dbReference type="HOGENOM" id="CLU_144811_6_0_4"/>
<dbReference type="OrthoDB" id="9801753at2"/>
<dbReference type="Proteomes" id="UP000002588">
    <property type="component" value="Chromosome"/>
</dbReference>
<dbReference type="GO" id="GO:0005886">
    <property type="term" value="C:plasma membrane"/>
    <property type="evidence" value="ECO:0007669"/>
    <property type="project" value="UniProtKB-SubCell"/>
</dbReference>
<dbReference type="HAMAP" id="MF_00386">
    <property type="entry name" value="UPF0161_YidD"/>
    <property type="match status" value="1"/>
</dbReference>
<dbReference type="InterPro" id="IPR002696">
    <property type="entry name" value="Membr_insert_effic_factor_YidD"/>
</dbReference>
<dbReference type="NCBIfam" id="TIGR00278">
    <property type="entry name" value="membrane protein insertion efficiency factor YidD"/>
    <property type="match status" value="1"/>
</dbReference>
<dbReference type="PANTHER" id="PTHR33383">
    <property type="entry name" value="MEMBRANE PROTEIN INSERTION EFFICIENCY FACTOR-RELATED"/>
    <property type="match status" value="1"/>
</dbReference>
<dbReference type="PANTHER" id="PTHR33383:SF1">
    <property type="entry name" value="MEMBRANE PROTEIN INSERTION EFFICIENCY FACTOR-RELATED"/>
    <property type="match status" value="1"/>
</dbReference>
<dbReference type="Pfam" id="PF01809">
    <property type="entry name" value="YidD"/>
    <property type="match status" value="1"/>
</dbReference>
<dbReference type="SMART" id="SM01234">
    <property type="entry name" value="Haemolytic"/>
    <property type="match status" value="1"/>
</dbReference>
<gene>
    <name type="ordered locus">azo3990</name>
</gene>
<sequence>MKTVLIVLLRFYRYAISPMLGRNCRFHPSCSEYAIEAVQRHGAVRGAWLAARRVARCHPFHPGGYDPVP</sequence>
<feature type="chain" id="PRO_1000013063" description="Putative membrane protein insertion efficiency factor">
    <location>
        <begin position="1"/>
        <end position="69"/>
    </location>
</feature>
<name>YIDD_AZOSB</name>
<proteinExistence type="inferred from homology"/>
<keyword id="KW-0997">Cell inner membrane</keyword>
<keyword id="KW-1003">Cell membrane</keyword>
<keyword id="KW-0472">Membrane</keyword>
<keyword id="KW-1185">Reference proteome</keyword>
<accession>A1KCQ0</accession>
<organism>
    <name type="scientific">Azoarcus sp. (strain BH72)</name>
    <dbReference type="NCBI Taxonomy" id="418699"/>
    <lineage>
        <taxon>Bacteria</taxon>
        <taxon>Pseudomonadati</taxon>
        <taxon>Pseudomonadota</taxon>
        <taxon>Betaproteobacteria</taxon>
        <taxon>Rhodocyclales</taxon>
        <taxon>Zoogloeaceae</taxon>
        <taxon>Azoarcus</taxon>
    </lineage>
</organism>